<gene>
    <name evidence="1" type="primary">rplE</name>
    <name evidence="1" type="synonym">rpl5</name>
    <name type="ordered locus">P9515_17281</name>
</gene>
<proteinExistence type="inferred from homology"/>
<sequence>MTLKTRYKETIRPKLLKDLGLKNIHQVPKVIKVNVNRGLGEAASNSKALEASLNEMATITGQKALVTRSKKAIAGFKIREGMAIGCTVTLRGDRMYSFLERFINLALPRIRDFRGVNPKSFDGRGNYTLGVKEQLIFPEISFDKIDSIRGMDITIVTSASNDQEGKALLKELGMPFSN</sequence>
<name>RL5_PROM5</name>
<dbReference type="EMBL" id="CP000552">
    <property type="protein sequence ID" value="ABM72935.1"/>
    <property type="molecule type" value="Genomic_DNA"/>
</dbReference>
<dbReference type="RefSeq" id="WP_011821026.1">
    <property type="nucleotide sequence ID" value="NC_008817.1"/>
</dbReference>
<dbReference type="SMR" id="A2BYS4"/>
<dbReference type="STRING" id="167542.P9515_17281"/>
<dbReference type="GeneID" id="60200846"/>
<dbReference type="KEGG" id="pmc:P9515_17281"/>
<dbReference type="eggNOG" id="COG0094">
    <property type="taxonomic scope" value="Bacteria"/>
</dbReference>
<dbReference type="HOGENOM" id="CLU_061015_2_1_3"/>
<dbReference type="OrthoDB" id="9806626at2"/>
<dbReference type="Proteomes" id="UP000001589">
    <property type="component" value="Chromosome"/>
</dbReference>
<dbReference type="GO" id="GO:1990904">
    <property type="term" value="C:ribonucleoprotein complex"/>
    <property type="evidence" value="ECO:0007669"/>
    <property type="project" value="UniProtKB-KW"/>
</dbReference>
<dbReference type="GO" id="GO:0005840">
    <property type="term" value="C:ribosome"/>
    <property type="evidence" value="ECO:0007669"/>
    <property type="project" value="UniProtKB-KW"/>
</dbReference>
<dbReference type="GO" id="GO:0019843">
    <property type="term" value="F:rRNA binding"/>
    <property type="evidence" value="ECO:0007669"/>
    <property type="project" value="UniProtKB-UniRule"/>
</dbReference>
<dbReference type="GO" id="GO:0003735">
    <property type="term" value="F:structural constituent of ribosome"/>
    <property type="evidence" value="ECO:0007669"/>
    <property type="project" value="InterPro"/>
</dbReference>
<dbReference type="GO" id="GO:0000049">
    <property type="term" value="F:tRNA binding"/>
    <property type="evidence" value="ECO:0007669"/>
    <property type="project" value="UniProtKB-UniRule"/>
</dbReference>
<dbReference type="GO" id="GO:0006412">
    <property type="term" value="P:translation"/>
    <property type="evidence" value="ECO:0007669"/>
    <property type="project" value="UniProtKB-UniRule"/>
</dbReference>
<dbReference type="FunFam" id="3.30.1440.10:FF:000001">
    <property type="entry name" value="50S ribosomal protein L5"/>
    <property type="match status" value="1"/>
</dbReference>
<dbReference type="Gene3D" id="3.30.1440.10">
    <property type="match status" value="1"/>
</dbReference>
<dbReference type="HAMAP" id="MF_01333_B">
    <property type="entry name" value="Ribosomal_uL5_B"/>
    <property type="match status" value="1"/>
</dbReference>
<dbReference type="InterPro" id="IPR002132">
    <property type="entry name" value="Ribosomal_uL5"/>
</dbReference>
<dbReference type="InterPro" id="IPR020930">
    <property type="entry name" value="Ribosomal_uL5_bac-type"/>
</dbReference>
<dbReference type="InterPro" id="IPR031309">
    <property type="entry name" value="Ribosomal_uL5_C"/>
</dbReference>
<dbReference type="InterPro" id="IPR020929">
    <property type="entry name" value="Ribosomal_uL5_CS"/>
</dbReference>
<dbReference type="InterPro" id="IPR022803">
    <property type="entry name" value="Ribosomal_uL5_dom_sf"/>
</dbReference>
<dbReference type="InterPro" id="IPR031310">
    <property type="entry name" value="Ribosomal_uL5_N"/>
</dbReference>
<dbReference type="NCBIfam" id="NF000585">
    <property type="entry name" value="PRK00010.1"/>
    <property type="match status" value="1"/>
</dbReference>
<dbReference type="PANTHER" id="PTHR11994">
    <property type="entry name" value="60S RIBOSOMAL PROTEIN L11-RELATED"/>
    <property type="match status" value="1"/>
</dbReference>
<dbReference type="Pfam" id="PF00281">
    <property type="entry name" value="Ribosomal_L5"/>
    <property type="match status" value="1"/>
</dbReference>
<dbReference type="Pfam" id="PF00673">
    <property type="entry name" value="Ribosomal_L5_C"/>
    <property type="match status" value="1"/>
</dbReference>
<dbReference type="PIRSF" id="PIRSF002161">
    <property type="entry name" value="Ribosomal_L5"/>
    <property type="match status" value="1"/>
</dbReference>
<dbReference type="SUPFAM" id="SSF55282">
    <property type="entry name" value="RL5-like"/>
    <property type="match status" value="1"/>
</dbReference>
<dbReference type="PROSITE" id="PS00358">
    <property type="entry name" value="RIBOSOMAL_L5"/>
    <property type="match status" value="1"/>
</dbReference>
<protein>
    <recommendedName>
        <fullName evidence="1">Large ribosomal subunit protein uL5</fullName>
    </recommendedName>
    <alternativeName>
        <fullName evidence="2">50S ribosomal protein L5</fullName>
    </alternativeName>
</protein>
<accession>A2BYS4</accession>
<comment type="function">
    <text evidence="1">This is one of the proteins that bind and probably mediate the attachment of the 5S RNA into the large ribosomal subunit, where it forms part of the central protuberance. In the 70S ribosome it contacts protein S13 of the 30S subunit (bridge B1b), connecting the 2 subunits; this bridge is implicated in subunit movement. Contacts the P site tRNA; the 5S rRNA and some of its associated proteins might help stabilize positioning of ribosome-bound tRNAs.</text>
</comment>
<comment type="subunit">
    <text evidence="1">Part of the 50S ribosomal subunit; part of the 5S rRNA/L5/L18/L25 subcomplex. Contacts the 5S rRNA and the P site tRNA. Forms a bridge to the 30S subunit in the 70S ribosome.</text>
</comment>
<comment type="similarity">
    <text evidence="1">Belongs to the universal ribosomal protein uL5 family.</text>
</comment>
<keyword id="KW-0687">Ribonucleoprotein</keyword>
<keyword id="KW-0689">Ribosomal protein</keyword>
<keyword id="KW-0694">RNA-binding</keyword>
<keyword id="KW-0699">rRNA-binding</keyword>
<keyword id="KW-0820">tRNA-binding</keyword>
<organism>
    <name type="scientific">Prochlorococcus marinus (strain MIT 9515)</name>
    <dbReference type="NCBI Taxonomy" id="167542"/>
    <lineage>
        <taxon>Bacteria</taxon>
        <taxon>Bacillati</taxon>
        <taxon>Cyanobacteriota</taxon>
        <taxon>Cyanophyceae</taxon>
        <taxon>Synechococcales</taxon>
        <taxon>Prochlorococcaceae</taxon>
        <taxon>Prochlorococcus</taxon>
    </lineage>
</organism>
<reference key="1">
    <citation type="journal article" date="2007" name="PLoS Genet.">
        <title>Patterns and implications of gene gain and loss in the evolution of Prochlorococcus.</title>
        <authorList>
            <person name="Kettler G.C."/>
            <person name="Martiny A.C."/>
            <person name="Huang K."/>
            <person name="Zucker J."/>
            <person name="Coleman M.L."/>
            <person name="Rodrigue S."/>
            <person name="Chen F."/>
            <person name="Lapidus A."/>
            <person name="Ferriera S."/>
            <person name="Johnson J."/>
            <person name="Steglich C."/>
            <person name="Church G.M."/>
            <person name="Richardson P."/>
            <person name="Chisholm S.W."/>
        </authorList>
    </citation>
    <scope>NUCLEOTIDE SEQUENCE [LARGE SCALE GENOMIC DNA]</scope>
    <source>
        <strain>MIT 9515</strain>
    </source>
</reference>
<feature type="chain" id="PRO_1000052796" description="Large ribosomal subunit protein uL5">
    <location>
        <begin position="1"/>
        <end position="178"/>
    </location>
</feature>
<evidence type="ECO:0000255" key="1">
    <source>
        <dbReference type="HAMAP-Rule" id="MF_01333"/>
    </source>
</evidence>
<evidence type="ECO:0000305" key="2"/>